<gene>
    <name type="primary">PGIC1</name>
</gene>
<proteinExistence type="inferred from homology"/>
<keyword id="KW-0963">Cytoplasm</keyword>
<keyword id="KW-0312">Gluconeogenesis</keyword>
<keyword id="KW-0324">Glycolysis</keyword>
<keyword id="KW-0413">Isomerase</keyword>
<reference key="1">
    <citation type="journal article" date="1996" name="Syst. Bot.">
        <title>Phylogenetic relationships among the sections of Clarkia (Onagraceae) inferred from the nucleotide sequences of PgiC.</title>
        <authorList>
            <person name="Gottlieb L.D."/>
            <person name="Ford V.S."/>
        </authorList>
        <dbReference type="AGRICOLA" id="IND20535960"/>
    </citation>
    <scope>NUCLEOTIDE SEQUENCE [GENOMIC DNA]</scope>
    <source>
        <strain>Population LDG 8615</strain>
    </source>
</reference>
<evidence type="ECO:0000250" key="1"/>
<evidence type="ECO:0000305" key="2"/>
<dbReference type="EC" id="5.3.1.9"/>
<dbReference type="EMBL" id="X89395">
    <property type="protein sequence ID" value="CAA61575.1"/>
    <property type="molecule type" value="Genomic_DNA"/>
</dbReference>
<dbReference type="SMR" id="P54234"/>
<dbReference type="UniPathway" id="UPA00109">
    <property type="reaction ID" value="UER00181"/>
</dbReference>
<dbReference type="GO" id="GO:0005829">
    <property type="term" value="C:cytosol"/>
    <property type="evidence" value="ECO:0007669"/>
    <property type="project" value="TreeGrafter"/>
</dbReference>
<dbReference type="GO" id="GO:0097367">
    <property type="term" value="F:carbohydrate derivative binding"/>
    <property type="evidence" value="ECO:0007669"/>
    <property type="project" value="InterPro"/>
</dbReference>
<dbReference type="GO" id="GO:0004347">
    <property type="term" value="F:glucose-6-phosphate isomerase activity"/>
    <property type="evidence" value="ECO:0007669"/>
    <property type="project" value="UniProtKB-EC"/>
</dbReference>
<dbReference type="GO" id="GO:0048029">
    <property type="term" value="F:monosaccharide binding"/>
    <property type="evidence" value="ECO:0007669"/>
    <property type="project" value="TreeGrafter"/>
</dbReference>
<dbReference type="GO" id="GO:0006094">
    <property type="term" value="P:gluconeogenesis"/>
    <property type="evidence" value="ECO:0007669"/>
    <property type="project" value="UniProtKB-KW"/>
</dbReference>
<dbReference type="GO" id="GO:0051156">
    <property type="term" value="P:glucose 6-phosphate metabolic process"/>
    <property type="evidence" value="ECO:0007669"/>
    <property type="project" value="TreeGrafter"/>
</dbReference>
<dbReference type="GO" id="GO:0006096">
    <property type="term" value="P:glycolytic process"/>
    <property type="evidence" value="ECO:0007669"/>
    <property type="project" value="UniProtKB-UniPathway"/>
</dbReference>
<dbReference type="CDD" id="cd05015">
    <property type="entry name" value="SIS_PGI_1"/>
    <property type="match status" value="1"/>
</dbReference>
<dbReference type="CDD" id="cd05016">
    <property type="entry name" value="SIS_PGI_2"/>
    <property type="match status" value="1"/>
</dbReference>
<dbReference type="FunFam" id="1.10.1390.10:FF:000002">
    <property type="entry name" value="Glucose-6-phosphate isomerase"/>
    <property type="match status" value="1"/>
</dbReference>
<dbReference type="FunFam" id="3.40.50.10490:FF:000018">
    <property type="entry name" value="Glucose-6-phosphate isomerase"/>
    <property type="match status" value="1"/>
</dbReference>
<dbReference type="FunFam" id="3.40.50.10490:FF:000031">
    <property type="entry name" value="Glucose-6-phosphate isomerase"/>
    <property type="match status" value="1"/>
</dbReference>
<dbReference type="FunFam" id="3.40.50.10490:FF:000048">
    <property type="entry name" value="Glucose-6-phosphate isomerase"/>
    <property type="match status" value="1"/>
</dbReference>
<dbReference type="Gene3D" id="1.10.1390.10">
    <property type="match status" value="1"/>
</dbReference>
<dbReference type="Gene3D" id="3.40.50.10490">
    <property type="entry name" value="Glucose-6-phosphate isomerase like protein, domain 1"/>
    <property type="match status" value="2"/>
</dbReference>
<dbReference type="HAMAP" id="MF_00473">
    <property type="entry name" value="G6P_isomerase"/>
    <property type="match status" value="1"/>
</dbReference>
<dbReference type="InterPro" id="IPR001672">
    <property type="entry name" value="G6P_Isomerase"/>
</dbReference>
<dbReference type="InterPro" id="IPR023096">
    <property type="entry name" value="G6P_Isomerase_C"/>
</dbReference>
<dbReference type="InterPro" id="IPR018189">
    <property type="entry name" value="Phosphoglucose_isomerase_CS"/>
</dbReference>
<dbReference type="InterPro" id="IPR046348">
    <property type="entry name" value="SIS_dom_sf"/>
</dbReference>
<dbReference type="InterPro" id="IPR035476">
    <property type="entry name" value="SIS_PGI_1"/>
</dbReference>
<dbReference type="InterPro" id="IPR035482">
    <property type="entry name" value="SIS_PGI_2"/>
</dbReference>
<dbReference type="NCBIfam" id="NF001211">
    <property type="entry name" value="PRK00179.1"/>
    <property type="match status" value="1"/>
</dbReference>
<dbReference type="PANTHER" id="PTHR11469">
    <property type="entry name" value="GLUCOSE-6-PHOSPHATE ISOMERASE"/>
    <property type="match status" value="1"/>
</dbReference>
<dbReference type="PANTHER" id="PTHR11469:SF1">
    <property type="entry name" value="GLUCOSE-6-PHOSPHATE ISOMERASE"/>
    <property type="match status" value="1"/>
</dbReference>
<dbReference type="Pfam" id="PF00342">
    <property type="entry name" value="PGI"/>
    <property type="match status" value="1"/>
</dbReference>
<dbReference type="PRINTS" id="PR00662">
    <property type="entry name" value="G6PISOMERASE"/>
</dbReference>
<dbReference type="SUPFAM" id="SSF53697">
    <property type="entry name" value="SIS domain"/>
    <property type="match status" value="1"/>
</dbReference>
<dbReference type="PROSITE" id="PS00765">
    <property type="entry name" value="P_GLUCOSE_ISOMERASE_1"/>
    <property type="match status" value="1"/>
</dbReference>
<dbReference type="PROSITE" id="PS00174">
    <property type="entry name" value="P_GLUCOSE_ISOMERASE_2"/>
    <property type="match status" value="1"/>
</dbReference>
<dbReference type="PROSITE" id="PS51463">
    <property type="entry name" value="P_GLUCOSE_ISOMERASE_3"/>
    <property type="match status" value="1"/>
</dbReference>
<accession>P54234</accession>
<organism>
    <name type="scientific">Clarkia arcuata</name>
    <name type="common">Glandular clarkia</name>
    <name type="synonym">Oenothera arcuata</name>
    <dbReference type="NCBI Taxonomy" id="50280"/>
    <lineage>
        <taxon>Eukaryota</taxon>
        <taxon>Viridiplantae</taxon>
        <taxon>Streptophyta</taxon>
        <taxon>Embryophyta</taxon>
        <taxon>Tracheophyta</taxon>
        <taxon>Spermatophyta</taxon>
        <taxon>Magnoliopsida</taxon>
        <taxon>eudicotyledons</taxon>
        <taxon>Gunneridae</taxon>
        <taxon>Pentapetalae</taxon>
        <taxon>rosids</taxon>
        <taxon>malvids</taxon>
        <taxon>Myrtales</taxon>
        <taxon>Onagraceae</taxon>
        <taxon>Onagroideae</taxon>
        <taxon>Onagreae</taxon>
        <taxon>Clarkia</taxon>
    </lineage>
</organism>
<sequence>MASPALISETEAWKDLKAHLEGIKRTHLRELMGDTERCQSMMVEFDNIFLDYSRQQASSDTINKLYKLADAAHLKQKIDRMYNGDHINSTENRSVLHVALRAPRNSAICSDGKNVVPDVWNVLDKIKDFSDRVRNGSWIGATGKKLKDVIAVGIGGSFLGPLFVHTALQTDPEASKNARGRELRFLANVDPIDVARNISGLNPESTLVVVVSKTFTTAETMLNARTLREWISSALGPSAVAKHMVAVSTNLPLVEKFGIDPINAFAFWDWVGGRYSVCSAVGVLPLSLQYGFAVVEKFLQGAHSIDQHFSSASFEKNIPVLLGLLSVWNVSFLGYPARAILPYSQALEKLAPHIQQVSMESNGKGVSIDGLPLPFESGEIDFGEPGTNGQHSFYQLIHQGRVIPCDFIGVVKSQQPVYLKGEVVNNHDELMSNFFAQPDALAYGKTPEQLKKENVSEHLIPHKTFTGNRPSISILLPTLDGYRIGQLLAIYEHRVAVQGFVWGINSFDQWGVELGKSLATQVRKQLHASRVKGEPVEGFNFSTKTLLERYLEATSDVPADPSTLLPNI</sequence>
<name>G6PI1_CLAAR</name>
<feature type="chain" id="PRO_0000180552" description="Glucose-6-phosphate isomerase, cytosolic 1">
    <location>
        <begin position="1"/>
        <end position="568"/>
    </location>
</feature>
<feature type="active site" description="Proton donor" evidence="1">
    <location>
        <position position="360"/>
    </location>
</feature>
<feature type="active site" evidence="1">
    <location>
        <position position="391"/>
    </location>
</feature>
<feature type="active site" evidence="1">
    <location>
        <position position="516"/>
    </location>
</feature>
<comment type="catalytic activity">
    <reaction>
        <text>alpha-D-glucose 6-phosphate = beta-D-fructose 6-phosphate</text>
        <dbReference type="Rhea" id="RHEA:11816"/>
        <dbReference type="ChEBI" id="CHEBI:57634"/>
        <dbReference type="ChEBI" id="CHEBI:58225"/>
        <dbReference type="EC" id="5.3.1.9"/>
    </reaction>
</comment>
<comment type="pathway">
    <text>Carbohydrate degradation; glycolysis; D-glyceraldehyde 3-phosphate and glycerone phosphate from D-glucose: step 2/4.</text>
</comment>
<comment type="subunit">
    <text evidence="1">Homodimer.</text>
</comment>
<comment type="subcellular location">
    <subcellularLocation>
        <location evidence="1">Cytoplasm</location>
    </subcellularLocation>
</comment>
<comment type="similarity">
    <text evidence="2">Belongs to the GPI family.</text>
</comment>
<protein>
    <recommendedName>
        <fullName>Glucose-6-phosphate isomerase, cytosolic 1</fullName>
        <shortName>GPI</shortName>
        <ecNumber>5.3.1.9</ecNumber>
    </recommendedName>
    <alternativeName>
        <fullName>Phosphoglucose isomerase</fullName>
        <shortName>PGI</shortName>
    </alternativeName>
    <alternativeName>
        <fullName>Phosphohexose isomerase</fullName>
        <shortName>PHI</shortName>
    </alternativeName>
</protein>